<reference key="1">
    <citation type="submission" date="2008-02" db="EMBL/GenBank/DDBJ databases">
        <title>Complete sequence of chromosome of Methylobacterium sp. 4-46.</title>
        <authorList>
            <consortium name="US DOE Joint Genome Institute"/>
            <person name="Copeland A."/>
            <person name="Lucas S."/>
            <person name="Lapidus A."/>
            <person name="Glavina del Rio T."/>
            <person name="Dalin E."/>
            <person name="Tice H."/>
            <person name="Bruce D."/>
            <person name="Goodwin L."/>
            <person name="Pitluck S."/>
            <person name="Chertkov O."/>
            <person name="Brettin T."/>
            <person name="Detter J.C."/>
            <person name="Han C."/>
            <person name="Kuske C.R."/>
            <person name="Schmutz J."/>
            <person name="Larimer F."/>
            <person name="Land M."/>
            <person name="Hauser L."/>
            <person name="Kyrpides N."/>
            <person name="Ivanova N."/>
            <person name="Marx C.J."/>
            <person name="Richardson P."/>
        </authorList>
    </citation>
    <scope>NUCLEOTIDE SEQUENCE [LARGE SCALE GENOMIC DNA]</scope>
    <source>
        <strain>4-46</strain>
    </source>
</reference>
<accession>B0ULK6</accession>
<evidence type="ECO:0000255" key="1">
    <source>
        <dbReference type="HAMAP-Rule" id="MF_01357"/>
    </source>
</evidence>
<gene>
    <name evidence="1" type="primary">nuoC</name>
    <name type="ordered locus">M446_4392</name>
</gene>
<proteinExistence type="inferred from homology"/>
<comment type="function">
    <text evidence="1">NDH-1 shuttles electrons from NADH, via FMN and iron-sulfur (Fe-S) centers, to quinones in the respiratory chain. The immediate electron acceptor for the enzyme in this species is believed to be ubiquinone. Couples the redox reaction to proton translocation (for every two electrons transferred, four hydrogen ions are translocated across the cytoplasmic membrane), and thus conserves the redox energy in a proton gradient.</text>
</comment>
<comment type="catalytic activity">
    <reaction evidence="1">
        <text>a quinone + NADH + 5 H(+)(in) = a quinol + NAD(+) + 4 H(+)(out)</text>
        <dbReference type="Rhea" id="RHEA:57888"/>
        <dbReference type="ChEBI" id="CHEBI:15378"/>
        <dbReference type="ChEBI" id="CHEBI:24646"/>
        <dbReference type="ChEBI" id="CHEBI:57540"/>
        <dbReference type="ChEBI" id="CHEBI:57945"/>
        <dbReference type="ChEBI" id="CHEBI:132124"/>
    </reaction>
</comment>
<comment type="subunit">
    <text evidence="1">NDH-1 is composed of 14 different subunits. Subunits NuoB, C, D, E, F, and G constitute the peripheral sector of the complex.</text>
</comment>
<comment type="subcellular location">
    <subcellularLocation>
        <location evidence="1">Cell inner membrane</location>
        <topology evidence="1">Peripheral membrane protein</topology>
        <orientation evidence="1">Cytoplasmic side</orientation>
    </subcellularLocation>
</comment>
<comment type="similarity">
    <text evidence="1">Belongs to the complex I 30 kDa subunit family.</text>
</comment>
<feature type="chain" id="PRO_0000358128" description="NADH-quinone oxidoreductase subunit C">
    <location>
        <begin position="1"/>
        <end position="215"/>
    </location>
</feature>
<dbReference type="EC" id="7.1.1.-" evidence="1"/>
<dbReference type="EMBL" id="CP000943">
    <property type="protein sequence ID" value="ACA18734.1"/>
    <property type="molecule type" value="Genomic_DNA"/>
</dbReference>
<dbReference type="RefSeq" id="WP_012334123.1">
    <property type="nucleotide sequence ID" value="NC_010511.1"/>
</dbReference>
<dbReference type="SMR" id="B0ULK6"/>
<dbReference type="STRING" id="426117.M446_4392"/>
<dbReference type="KEGG" id="met:M446_4392"/>
<dbReference type="eggNOG" id="COG0852">
    <property type="taxonomic scope" value="Bacteria"/>
</dbReference>
<dbReference type="HOGENOM" id="CLU_042628_2_1_5"/>
<dbReference type="GO" id="GO:0005886">
    <property type="term" value="C:plasma membrane"/>
    <property type="evidence" value="ECO:0007669"/>
    <property type="project" value="UniProtKB-SubCell"/>
</dbReference>
<dbReference type="GO" id="GO:0008137">
    <property type="term" value="F:NADH dehydrogenase (ubiquinone) activity"/>
    <property type="evidence" value="ECO:0007669"/>
    <property type="project" value="InterPro"/>
</dbReference>
<dbReference type="GO" id="GO:0050136">
    <property type="term" value="F:NADH:ubiquinone reductase (non-electrogenic) activity"/>
    <property type="evidence" value="ECO:0007669"/>
    <property type="project" value="UniProtKB-UniRule"/>
</dbReference>
<dbReference type="GO" id="GO:0048038">
    <property type="term" value="F:quinone binding"/>
    <property type="evidence" value="ECO:0007669"/>
    <property type="project" value="UniProtKB-KW"/>
</dbReference>
<dbReference type="Gene3D" id="3.30.460.80">
    <property type="entry name" value="NADH:ubiquinone oxidoreductase, 30kDa subunit"/>
    <property type="match status" value="1"/>
</dbReference>
<dbReference type="HAMAP" id="MF_01357">
    <property type="entry name" value="NDH1_NuoC"/>
    <property type="match status" value="1"/>
</dbReference>
<dbReference type="InterPro" id="IPR010218">
    <property type="entry name" value="NADH_DH_suC"/>
</dbReference>
<dbReference type="InterPro" id="IPR037232">
    <property type="entry name" value="NADH_quin_OxRdtase_su_C/D-like"/>
</dbReference>
<dbReference type="InterPro" id="IPR001268">
    <property type="entry name" value="NADH_UbQ_OxRdtase_30kDa_su"/>
</dbReference>
<dbReference type="InterPro" id="IPR020396">
    <property type="entry name" value="NADH_UbQ_OxRdtase_CS"/>
</dbReference>
<dbReference type="NCBIfam" id="TIGR01961">
    <property type="entry name" value="NuoC_fam"/>
    <property type="match status" value="1"/>
</dbReference>
<dbReference type="NCBIfam" id="NF004730">
    <property type="entry name" value="PRK06074.1-1"/>
    <property type="match status" value="1"/>
</dbReference>
<dbReference type="NCBIfam" id="NF004733">
    <property type="entry name" value="PRK06074.1-5"/>
    <property type="match status" value="1"/>
</dbReference>
<dbReference type="PANTHER" id="PTHR10884:SF14">
    <property type="entry name" value="NADH DEHYDROGENASE [UBIQUINONE] IRON-SULFUR PROTEIN 3, MITOCHONDRIAL"/>
    <property type="match status" value="1"/>
</dbReference>
<dbReference type="PANTHER" id="PTHR10884">
    <property type="entry name" value="NADH DEHYDROGENASE UBIQUINONE IRON-SULFUR PROTEIN 3"/>
    <property type="match status" value="1"/>
</dbReference>
<dbReference type="Pfam" id="PF00329">
    <property type="entry name" value="Complex1_30kDa"/>
    <property type="match status" value="1"/>
</dbReference>
<dbReference type="SUPFAM" id="SSF143243">
    <property type="entry name" value="Nqo5-like"/>
    <property type="match status" value="1"/>
</dbReference>
<dbReference type="PROSITE" id="PS00542">
    <property type="entry name" value="COMPLEX1_30K"/>
    <property type="match status" value="1"/>
</dbReference>
<protein>
    <recommendedName>
        <fullName evidence="1">NADH-quinone oxidoreductase subunit C</fullName>
        <ecNumber evidence="1">7.1.1.-</ecNumber>
    </recommendedName>
    <alternativeName>
        <fullName evidence="1">NADH dehydrogenase I subunit C</fullName>
    </alternativeName>
    <alternativeName>
        <fullName evidence="1">NDH-1 subunit C</fullName>
    </alternativeName>
</protein>
<name>NUOC_METS4</name>
<sequence length="215" mass="24497">MTNGITILPHTETEHGTGALQALSDRLAETLGGAVVERAIAFDELTLVVEPSEIVRVLTHLRDDPACGFRSFIDICGADYPGREKRFDVVYHLLSLRHNRRIRVKVQTDEATPVPSVITVFPAANWYERETYDLYGILFSGHPDLRRLLTDYGFEGHPLRKDFPLTGFVEVRYDQDEGRVVYEPVKLSQEFRQFDFLSPWEGTDYVLPGDEKAKP</sequence>
<keyword id="KW-0997">Cell inner membrane</keyword>
<keyword id="KW-1003">Cell membrane</keyword>
<keyword id="KW-0472">Membrane</keyword>
<keyword id="KW-0520">NAD</keyword>
<keyword id="KW-0874">Quinone</keyword>
<keyword id="KW-1278">Translocase</keyword>
<keyword id="KW-0813">Transport</keyword>
<keyword id="KW-0830">Ubiquinone</keyword>
<organism>
    <name type="scientific">Methylobacterium sp. (strain 4-46)</name>
    <dbReference type="NCBI Taxonomy" id="426117"/>
    <lineage>
        <taxon>Bacteria</taxon>
        <taxon>Pseudomonadati</taxon>
        <taxon>Pseudomonadota</taxon>
        <taxon>Alphaproteobacteria</taxon>
        <taxon>Hyphomicrobiales</taxon>
        <taxon>Methylobacteriaceae</taxon>
        <taxon>Methylobacterium</taxon>
    </lineage>
</organism>